<name>NDOB_RALSP</name>
<proteinExistence type="evidence at protein level"/>
<comment type="function">
    <text evidence="3 4">Component of the naphthalene dioxygenase (NDO) multicomponent enzyme system which catalyzes the incorporation of both atoms of molecular oxygen into naphthalene to form cis-(1R,2S)-dihydroxy-1,2-dihydronaphthalene (PubMed:11872705, PubMed:9573207). The alpha subunit has a catalytic role in the holoenzyme. Also able to use styrene as substrate (PubMed:11872705).</text>
</comment>
<comment type="catalytic activity">
    <reaction evidence="3">
        <text>naphthalene + NADH + O2 + H(+) = (1R,2S)-1,2-dihydronaphthalene-1,2-diol + NAD(+)</text>
        <dbReference type="Rhea" id="RHEA:19173"/>
        <dbReference type="ChEBI" id="CHEBI:15378"/>
        <dbReference type="ChEBI" id="CHEBI:15379"/>
        <dbReference type="ChEBI" id="CHEBI:16482"/>
        <dbReference type="ChEBI" id="CHEBI:44343"/>
        <dbReference type="ChEBI" id="CHEBI:57540"/>
        <dbReference type="ChEBI" id="CHEBI:57945"/>
        <dbReference type="EC" id="1.14.12.12"/>
    </reaction>
</comment>
<comment type="cofactor">
    <cofactor evidence="1 2">
        <name>[2Fe-2S] cluster</name>
        <dbReference type="ChEBI" id="CHEBI:190135"/>
    </cofactor>
    <text evidence="1 2">Binds 1 [2Fe-2S] cluster per subunit.</text>
</comment>
<comment type="cofactor">
    <cofactor evidence="1">
        <name>Fe(2+)</name>
        <dbReference type="ChEBI" id="CHEBI:29033"/>
    </cofactor>
    <text evidence="1">Binds 1 Fe(2+) ion per subunit.</text>
</comment>
<comment type="pathway">
    <text evidence="8">Aromatic compound metabolism; naphthalene degradation.</text>
</comment>
<comment type="subunit">
    <text evidence="3 4">The naphthalene dioxygenase (NDO) multicomponent enzyme system is composed of an electron transfer component and a dioxygenase component (iron sulfur protein (ISP)). The electron transfer component is composed of a ferredoxin reductase (NagAa) and a ferredoxin (NagAb), and the dioxygenase component is formed by a large alpha subunit (NagAc) and a small beta subunit (NagAd).</text>
</comment>
<comment type="similarity">
    <text evidence="7">Belongs to the bacterial ring-hydroxylating dioxygenase alpha subunit family.</text>
</comment>
<organism>
    <name type="scientific">Ralstonia sp</name>
    <dbReference type="NCBI Taxonomy" id="54061"/>
    <lineage>
        <taxon>Bacteria</taxon>
        <taxon>Pseudomonadati</taxon>
        <taxon>Pseudomonadota</taxon>
        <taxon>Betaproteobacteria</taxon>
        <taxon>Burkholderiales</taxon>
        <taxon>Burkholderiaceae</taxon>
        <taxon>Ralstonia</taxon>
    </lineage>
</organism>
<gene>
    <name evidence="6" type="primary">nagAc</name>
</gene>
<geneLocation type="plasmid" evidence="9">
    <name>pWWU2</name>
</geneLocation>
<reference key="1">
    <citation type="journal article" date="1998" name="J. Bacteriol.">
        <title>A gene cluster encoding steps in conversion of naphthalene to gentisate in Pseudomonas sp. strain U2.</title>
        <authorList>
            <person name="Fuenmayor S.L."/>
            <person name="Wild M."/>
            <person name="Boyes A.L."/>
            <person name="Williams P.A."/>
        </authorList>
    </citation>
    <scope>NUCLEOTIDE SEQUENCE [GENOMIC DNA]</scope>
    <scope>FUNCTION</scope>
    <scope>SUBUNIT</scope>
    <source>
        <strain>U2</strain>
    </source>
</reference>
<reference key="2">
    <citation type="journal article" date="2002" name="J. Bacteriol.">
        <title>Salicylate 5-hydroxylase from Ralstonia sp. strain U2: a monooxygenase with close relationships to and shared electron transport proteins with naphthalene dioxygenase.</title>
        <authorList>
            <person name="Zhou N.Y."/>
            <person name="Al-Dulayymi J."/>
            <person name="Baird M.S."/>
            <person name="Williams P.A."/>
        </authorList>
    </citation>
    <scope>FUNCTION</scope>
    <scope>CATALYTIC ACTIVITY</scope>
    <scope>PATHWAY</scope>
    <scope>SUBUNIT</scope>
    <scope>SUBSTRATE SPECIFICITY</scope>
    <source>
        <strain>U2</strain>
    </source>
</reference>
<accession>O52382</accession>
<protein>
    <recommendedName>
        <fullName evidence="5">Naphthalene 1,2-dioxygenase system, large oxygenase component</fullName>
        <ecNumber evidence="3">1.14.12.12</ecNumber>
    </recommendedName>
    <alternativeName>
        <fullName evidence="1">ISP NAP</fullName>
    </alternativeName>
    <alternativeName>
        <fullName evidence="1">Naphthalene 1,2-dioxygenase ISP alpha</fullName>
    </alternativeName>
    <alternativeName>
        <fullName evidence="5">Naphthalene 1,2-dioxygenase subunit alpha</fullName>
        <shortName evidence="1">ND subunit alpha</shortName>
        <shortName evidence="5">NDO subunit alpha</shortName>
    </alternativeName>
</protein>
<keyword id="KW-0001">2Fe-2S</keyword>
<keyword id="KW-0058">Aromatic hydrocarbons catabolism</keyword>
<keyword id="KW-0223">Dioxygenase</keyword>
<keyword id="KW-0408">Iron</keyword>
<keyword id="KW-0411">Iron-sulfur</keyword>
<keyword id="KW-0479">Metal-binding</keyword>
<keyword id="KW-0520">NAD</keyword>
<keyword id="KW-0560">Oxidoreductase</keyword>
<keyword id="KW-0614">Plasmid</keyword>
<sequence length="447" mass="49571">MIYENLVSEAGLTQKHLIHGDKELFQHELKTIFARNWLFLTHDSLIPSPGDYVTAKMGVDEVIVSRQNDGSVRAFLNVCRHRGKTLVHAEAGNAKGFVCSYHGWGFGSNGELQSVPFEKELYGDTIKKKCLGLKEVPRIESFHGFIYGCFDAEAPTLVDYLGDAAWYLEPIFKHSGGLELVGPPGKVVIKANWKAPAENFVGDAYHVGWTHASSLRSGQSIFTPLAGNAMLPPEGAGLQMTSKYGSGMGVLWDGYSGVHSADLVPEMMAFGGAKQEKLAKEIGDVRARIYRSHLNCTVFPNNSILTCSGVFKVWNPIDENTTEVWTYAIVEKDMPEDLKRRLADAVQRTFGPAGFWESDDNDNMETESQNAKKYQSSNSDLIANLGFGKDVYGDECYPGVVAKSAIGETSYRGFYRAYQAHISSSNWAEFENTSRNWHTELTKTTDR</sequence>
<evidence type="ECO:0000250" key="1">
    <source>
        <dbReference type="UniProtKB" id="P0A110"/>
    </source>
</evidence>
<evidence type="ECO:0000255" key="2">
    <source>
        <dbReference type="PROSITE-ProRule" id="PRU00628"/>
    </source>
</evidence>
<evidence type="ECO:0000269" key="3">
    <source>
    </source>
</evidence>
<evidence type="ECO:0000269" key="4">
    <source>
    </source>
</evidence>
<evidence type="ECO:0000303" key="5">
    <source>
    </source>
</evidence>
<evidence type="ECO:0000303" key="6">
    <source>
    </source>
</evidence>
<evidence type="ECO:0000305" key="7"/>
<evidence type="ECO:0000305" key="8">
    <source>
    </source>
</evidence>
<evidence type="ECO:0000312" key="9">
    <source>
        <dbReference type="EMBL" id="AAD12610.1"/>
    </source>
</evidence>
<dbReference type="EC" id="1.14.12.12" evidence="3"/>
<dbReference type="EMBL" id="AF036940">
    <property type="protein sequence ID" value="AAD12610.1"/>
    <property type="molecule type" value="Genomic_DNA"/>
</dbReference>
<dbReference type="SMR" id="O52382"/>
<dbReference type="UniPathway" id="UPA00082"/>
<dbReference type="GO" id="GO:1902494">
    <property type="term" value="C:catalytic complex"/>
    <property type="evidence" value="ECO:0000314"/>
    <property type="project" value="UniProtKB"/>
</dbReference>
<dbReference type="GO" id="GO:0051537">
    <property type="term" value="F:2 iron, 2 sulfur cluster binding"/>
    <property type="evidence" value="ECO:0000250"/>
    <property type="project" value="UniProtKB"/>
</dbReference>
<dbReference type="GO" id="GO:0005506">
    <property type="term" value="F:iron ion binding"/>
    <property type="evidence" value="ECO:0000250"/>
    <property type="project" value="UniProtKB"/>
</dbReference>
<dbReference type="GO" id="GO:0018625">
    <property type="term" value="F:naphthalene 1,2-dioxygenase activity"/>
    <property type="evidence" value="ECO:0007669"/>
    <property type="project" value="UniProtKB-EC"/>
</dbReference>
<dbReference type="GO" id="GO:1901170">
    <property type="term" value="P:naphthalene catabolic process"/>
    <property type="evidence" value="ECO:0000316"/>
    <property type="project" value="UniProtKB"/>
</dbReference>
<dbReference type="CDD" id="cd08881">
    <property type="entry name" value="RHO_alpha_C_NDO-like"/>
    <property type="match status" value="1"/>
</dbReference>
<dbReference type="FunFam" id="2.102.10.10:FF:000004">
    <property type="entry name" value="3-phenylpropionate/cinnamic acid dioxygenase subunit alpha"/>
    <property type="match status" value="1"/>
</dbReference>
<dbReference type="FunFam" id="3.90.380.10:FF:000007">
    <property type="entry name" value="Naphthalene 1,2-dioxygenase system, large oxygenase component"/>
    <property type="match status" value="1"/>
</dbReference>
<dbReference type="Gene3D" id="3.90.380.10">
    <property type="entry name" value="Naphthalene 1,2-dioxygenase Alpha Subunit, Chain A, domain 1"/>
    <property type="match status" value="1"/>
</dbReference>
<dbReference type="Gene3D" id="2.102.10.10">
    <property type="entry name" value="Rieske [2Fe-2S] iron-sulphur domain"/>
    <property type="match status" value="1"/>
</dbReference>
<dbReference type="InterPro" id="IPR043266">
    <property type="entry name" value="RHO_NdoB-like_C"/>
</dbReference>
<dbReference type="InterPro" id="IPR017941">
    <property type="entry name" value="Rieske_2Fe-2S"/>
</dbReference>
<dbReference type="InterPro" id="IPR036922">
    <property type="entry name" value="Rieske_2Fe-2S_sf"/>
</dbReference>
<dbReference type="InterPro" id="IPR015881">
    <property type="entry name" value="Ring-hydroxy_dOase_2Fe2S_BS"/>
</dbReference>
<dbReference type="InterPro" id="IPR015879">
    <property type="entry name" value="Ring_hydroxy_dOase_asu_C_dom"/>
</dbReference>
<dbReference type="InterPro" id="IPR001663">
    <property type="entry name" value="Rng_hydr_dOase-A"/>
</dbReference>
<dbReference type="PANTHER" id="PTHR43756:SF1">
    <property type="entry name" value="3-PHENYLPROPIONATE_CINNAMIC ACID DIOXYGENASE SUBUNIT ALPHA"/>
    <property type="match status" value="1"/>
</dbReference>
<dbReference type="PANTHER" id="PTHR43756">
    <property type="entry name" value="CHOLINE MONOOXYGENASE, CHLOROPLASTIC"/>
    <property type="match status" value="1"/>
</dbReference>
<dbReference type="Pfam" id="PF00355">
    <property type="entry name" value="Rieske"/>
    <property type="match status" value="1"/>
</dbReference>
<dbReference type="Pfam" id="PF00848">
    <property type="entry name" value="Ring_hydroxyl_A"/>
    <property type="match status" value="1"/>
</dbReference>
<dbReference type="PRINTS" id="PR00090">
    <property type="entry name" value="RNGDIOXGNASE"/>
</dbReference>
<dbReference type="SUPFAM" id="SSF55961">
    <property type="entry name" value="Bet v1-like"/>
    <property type="match status" value="1"/>
</dbReference>
<dbReference type="SUPFAM" id="SSF50022">
    <property type="entry name" value="ISP domain"/>
    <property type="match status" value="1"/>
</dbReference>
<dbReference type="PROSITE" id="PS51296">
    <property type="entry name" value="RIESKE"/>
    <property type="match status" value="1"/>
</dbReference>
<dbReference type="PROSITE" id="PS00570">
    <property type="entry name" value="RING_HYDROXYL_ALPHA"/>
    <property type="match status" value="1"/>
</dbReference>
<feature type="chain" id="PRO_0000421811" description="Naphthalene 1,2-dioxygenase system, large oxygenase component">
    <location>
        <begin position="1"/>
        <end position="447"/>
    </location>
</feature>
<feature type="domain" description="Rieske" evidence="2">
    <location>
        <begin position="37"/>
        <end position="135"/>
    </location>
</feature>
<feature type="binding site" evidence="1 2">
    <location>
        <position position="79"/>
    </location>
    <ligand>
        <name>[2Fe-2S] cluster</name>
        <dbReference type="ChEBI" id="CHEBI:190135"/>
    </ligand>
</feature>
<feature type="binding site" evidence="1 2">
    <location>
        <position position="81"/>
    </location>
    <ligand>
        <name>[2Fe-2S] cluster</name>
        <dbReference type="ChEBI" id="CHEBI:190135"/>
    </ligand>
</feature>
<feature type="binding site" evidence="1 2">
    <location>
        <position position="99"/>
    </location>
    <ligand>
        <name>[2Fe-2S] cluster</name>
        <dbReference type="ChEBI" id="CHEBI:190135"/>
    </ligand>
</feature>
<feature type="binding site" evidence="1 2">
    <location>
        <position position="102"/>
    </location>
    <ligand>
        <name>[2Fe-2S] cluster</name>
        <dbReference type="ChEBI" id="CHEBI:190135"/>
    </ligand>
</feature>
<feature type="binding site" evidence="1">
    <location>
        <position position="206"/>
    </location>
    <ligand>
        <name>Fe cation</name>
        <dbReference type="ChEBI" id="CHEBI:24875"/>
    </ligand>
</feature>
<feature type="binding site" evidence="1">
    <location>
        <position position="211"/>
    </location>
    <ligand>
        <name>Fe cation</name>
        <dbReference type="ChEBI" id="CHEBI:24875"/>
    </ligand>
</feature>
<feature type="binding site" evidence="1">
    <location>
        <position position="360"/>
    </location>
    <ligand>
        <name>Fe cation</name>
        <dbReference type="ChEBI" id="CHEBI:24875"/>
    </ligand>
</feature>